<protein>
    <recommendedName>
        <fullName evidence="1">ATP synthase subunit beta, chloroplastic</fullName>
        <ecNumber evidence="1">7.1.2.2</ecNumber>
    </recommendedName>
    <alternativeName>
        <fullName evidence="1">ATP synthase F1 sector subunit beta</fullName>
    </alternativeName>
    <alternativeName>
        <fullName evidence="1">F-ATPase subunit beta</fullName>
    </alternativeName>
</protein>
<comment type="function">
    <text evidence="1">Produces ATP from ADP in the presence of a proton gradient across the membrane. The catalytic sites are hosted primarily by the beta subunits.</text>
</comment>
<comment type="catalytic activity">
    <reaction evidence="1">
        <text>ATP + H2O + 4 H(+)(in) = ADP + phosphate + 5 H(+)(out)</text>
        <dbReference type="Rhea" id="RHEA:57720"/>
        <dbReference type="ChEBI" id="CHEBI:15377"/>
        <dbReference type="ChEBI" id="CHEBI:15378"/>
        <dbReference type="ChEBI" id="CHEBI:30616"/>
        <dbReference type="ChEBI" id="CHEBI:43474"/>
        <dbReference type="ChEBI" id="CHEBI:456216"/>
        <dbReference type="EC" id="7.1.2.2"/>
    </reaction>
</comment>
<comment type="subunit">
    <text evidence="1">F-type ATPases have 2 components, CF(1) - the catalytic core - and CF(0) - the membrane proton channel. CF(1) has five subunits: alpha(3), beta(3), gamma(1), delta(1), epsilon(1). CF(0) has four main subunits: a(1), b(1), b'(1) and c(9-12).</text>
</comment>
<comment type="subcellular location">
    <subcellularLocation>
        <location evidence="1">Plastid</location>
        <location evidence="1">Chloroplast thylakoid membrane</location>
        <topology evidence="1">Peripheral membrane protein</topology>
    </subcellularLocation>
</comment>
<comment type="similarity">
    <text evidence="1">Belongs to the ATPase alpha/beta chains family.</text>
</comment>
<dbReference type="EC" id="7.1.2.2" evidence="1"/>
<dbReference type="EMBL" id="AJ235424">
    <property type="protein sequence ID" value="CAB89707.1"/>
    <property type="molecule type" value="Genomic_DNA"/>
</dbReference>
<dbReference type="EMBL" id="AF528847">
    <property type="protein sequence ID" value="AAQ09235.1"/>
    <property type="molecule type" value="Genomic_DNA"/>
</dbReference>
<dbReference type="SMR" id="Q9MRM0"/>
<dbReference type="GO" id="GO:0009535">
    <property type="term" value="C:chloroplast thylakoid membrane"/>
    <property type="evidence" value="ECO:0007669"/>
    <property type="project" value="UniProtKB-SubCell"/>
</dbReference>
<dbReference type="GO" id="GO:0005739">
    <property type="term" value="C:mitochondrion"/>
    <property type="evidence" value="ECO:0007669"/>
    <property type="project" value="GOC"/>
</dbReference>
<dbReference type="GO" id="GO:0045259">
    <property type="term" value="C:proton-transporting ATP synthase complex"/>
    <property type="evidence" value="ECO:0007669"/>
    <property type="project" value="UniProtKB-KW"/>
</dbReference>
<dbReference type="GO" id="GO:0005524">
    <property type="term" value="F:ATP binding"/>
    <property type="evidence" value="ECO:0007669"/>
    <property type="project" value="UniProtKB-UniRule"/>
</dbReference>
<dbReference type="GO" id="GO:0016887">
    <property type="term" value="F:ATP hydrolysis activity"/>
    <property type="evidence" value="ECO:0007669"/>
    <property type="project" value="InterPro"/>
</dbReference>
<dbReference type="GO" id="GO:0046933">
    <property type="term" value="F:proton-transporting ATP synthase activity, rotational mechanism"/>
    <property type="evidence" value="ECO:0007669"/>
    <property type="project" value="UniProtKB-UniRule"/>
</dbReference>
<dbReference type="GO" id="GO:0042776">
    <property type="term" value="P:proton motive force-driven mitochondrial ATP synthesis"/>
    <property type="evidence" value="ECO:0007669"/>
    <property type="project" value="TreeGrafter"/>
</dbReference>
<dbReference type="CDD" id="cd18110">
    <property type="entry name" value="ATP-synt_F1_beta_C"/>
    <property type="match status" value="1"/>
</dbReference>
<dbReference type="CDD" id="cd18115">
    <property type="entry name" value="ATP-synt_F1_beta_N"/>
    <property type="match status" value="1"/>
</dbReference>
<dbReference type="CDD" id="cd01133">
    <property type="entry name" value="F1-ATPase_beta_CD"/>
    <property type="match status" value="1"/>
</dbReference>
<dbReference type="FunFam" id="1.10.1140.10:FF:000001">
    <property type="entry name" value="ATP synthase subunit beta"/>
    <property type="match status" value="1"/>
</dbReference>
<dbReference type="FunFam" id="3.40.50.12240:FF:000006">
    <property type="entry name" value="ATP synthase subunit beta"/>
    <property type="match status" value="1"/>
</dbReference>
<dbReference type="FunFam" id="3.40.50.300:FF:000004">
    <property type="entry name" value="ATP synthase subunit beta"/>
    <property type="match status" value="1"/>
</dbReference>
<dbReference type="FunFam" id="2.40.10.170:FF:000002">
    <property type="entry name" value="ATP synthase subunit beta, chloroplastic"/>
    <property type="match status" value="1"/>
</dbReference>
<dbReference type="Gene3D" id="2.40.10.170">
    <property type="match status" value="1"/>
</dbReference>
<dbReference type="Gene3D" id="1.10.1140.10">
    <property type="entry name" value="Bovine Mitochondrial F1-atpase, Atp Synthase Beta Chain, Chain D, domain 3"/>
    <property type="match status" value="1"/>
</dbReference>
<dbReference type="Gene3D" id="3.40.50.300">
    <property type="entry name" value="P-loop containing nucleotide triphosphate hydrolases"/>
    <property type="match status" value="1"/>
</dbReference>
<dbReference type="HAMAP" id="MF_01347">
    <property type="entry name" value="ATP_synth_beta_bact"/>
    <property type="match status" value="1"/>
</dbReference>
<dbReference type="InterPro" id="IPR003593">
    <property type="entry name" value="AAA+_ATPase"/>
</dbReference>
<dbReference type="InterPro" id="IPR055190">
    <property type="entry name" value="ATP-synt_VA_C"/>
</dbReference>
<dbReference type="InterPro" id="IPR005722">
    <property type="entry name" value="ATP_synth_F1_bsu"/>
</dbReference>
<dbReference type="InterPro" id="IPR020003">
    <property type="entry name" value="ATPase_a/bsu_AS"/>
</dbReference>
<dbReference type="InterPro" id="IPR050053">
    <property type="entry name" value="ATPase_alpha/beta_chains"/>
</dbReference>
<dbReference type="InterPro" id="IPR004100">
    <property type="entry name" value="ATPase_F1/V1/A1_a/bsu_N"/>
</dbReference>
<dbReference type="InterPro" id="IPR036121">
    <property type="entry name" value="ATPase_F1/V1/A1_a/bsu_N_sf"/>
</dbReference>
<dbReference type="InterPro" id="IPR000194">
    <property type="entry name" value="ATPase_F1/V1/A1_a/bsu_nucl-bd"/>
</dbReference>
<dbReference type="InterPro" id="IPR024034">
    <property type="entry name" value="ATPase_F1/V1_b/a_C"/>
</dbReference>
<dbReference type="InterPro" id="IPR027417">
    <property type="entry name" value="P-loop_NTPase"/>
</dbReference>
<dbReference type="NCBIfam" id="TIGR01039">
    <property type="entry name" value="atpD"/>
    <property type="match status" value="1"/>
</dbReference>
<dbReference type="PANTHER" id="PTHR15184">
    <property type="entry name" value="ATP SYNTHASE"/>
    <property type="match status" value="1"/>
</dbReference>
<dbReference type="PANTHER" id="PTHR15184:SF71">
    <property type="entry name" value="ATP SYNTHASE SUBUNIT BETA, MITOCHONDRIAL"/>
    <property type="match status" value="1"/>
</dbReference>
<dbReference type="Pfam" id="PF00006">
    <property type="entry name" value="ATP-synt_ab"/>
    <property type="match status" value="1"/>
</dbReference>
<dbReference type="Pfam" id="PF02874">
    <property type="entry name" value="ATP-synt_ab_N"/>
    <property type="match status" value="1"/>
</dbReference>
<dbReference type="Pfam" id="PF22919">
    <property type="entry name" value="ATP-synt_VA_C"/>
    <property type="match status" value="1"/>
</dbReference>
<dbReference type="SMART" id="SM00382">
    <property type="entry name" value="AAA"/>
    <property type="match status" value="1"/>
</dbReference>
<dbReference type="SUPFAM" id="SSF47917">
    <property type="entry name" value="C-terminal domain of alpha and beta subunits of F1 ATP synthase"/>
    <property type="match status" value="1"/>
</dbReference>
<dbReference type="SUPFAM" id="SSF50615">
    <property type="entry name" value="N-terminal domain of alpha and beta subunits of F1 ATP synthase"/>
    <property type="match status" value="1"/>
</dbReference>
<dbReference type="SUPFAM" id="SSF52540">
    <property type="entry name" value="P-loop containing nucleoside triphosphate hydrolases"/>
    <property type="match status" value="1"/>
</dbReference>
<dbReference type="PROSITE" id="PS00152">
    <property type="entry name" value="ATPASE_ALPHA_BETA"/>
    <property type="match status" value="1"/>
</dbReference>
<gene>
    <name evidence="1" type="primary">atpB</name>
</gene>
<accession>Q9MRM0</accession>
<organism>
    <name type="scientific">Canella winterana</name>
    <name type="common">Wild cinnamon</name>
    <name type="synonym">Laurus winterana</name>
    <dbReference type="NCBI Taxonomy" id="3426"/>
    <lineage>
        <taxon>Eukaryota</taxon>
        <taxon>Viridiplantae</taxon>
        <taxon>Streptophyta</taxon>
        <taxon>Embryophyta</taxon>
        <taxon>Tracheophyta</taxon>
        <taxon>Spermatophyta</taxon>
        <taxon>Magnoliopsida</taxon>
        <taxon>Magnoliidae</taxon>
        <taxon>Canellales</taxon>
        <taxon>Canellaceae</taxon>
        <taxon>Canella</taxon>
    </lineage>
</organism>
<feature type="chain" id="PRO_0000254455" description="ATP synthase subunit beta, chloroplastic">
    <location>
        <begin position="1"/>
        <end position="498"/>
    </location>
</feature>
<feature type="binding site" evidence="1">
    <location>
        <begin position="172"/>
        <end position="179"/>
    </location>
    <ligand>
        <name>ATP</name>
        <dbReference type="ChEBI" id="CHEBI:30616"/>
    </ligand>
</feature>
<reference key="1">
    <citation type="journal article" date="2000" name="Syst. Biol.">
        <title>Phylogenetics of flowering plants based upon a combined analysis of plastid atpB and rbcL gene sequences.</title>
        <authorList>
            <person name="Savolainen V."/>
            <person name="Chase M.W."/>
            <person name="Morton C.M."/>
            <person name="Hoot S.B."/>
            <person name="Soltis D.E."/>
            <person name="Bayer C."/>
            <person name="Fay M.F."/>
            <person name="de Bruijn A."/>
            <person name="Sullivan S."/>
            <person name="Qiu Y.-L."/>
        </authorList>
    </citation>
    <scope>NUCLEOTIDE SEQUENCE [GENOMIC DNA]</scope>
</reference>
<reference key="2">
    <citation type="submission" date="2002-07" db="EMBL/GenBank/DDBJ databases">
        <title>Parsing out signal and noise for seed-plant phylogenetic inference.</title>
        <authorList>
            <person name="Graham S.W."/>
            <person name="Rai H.S."/>
            <person name="Ikegami K."/>
            <person name="Reeves P.A."/>
            <person name="Olmstead R.G."/>
        </authorList>
    </citation>
    <scope>NUCLEOTIDE SEQUENCE [GENOMIC DNA]</scope>
</reference>
<keyword id="KW-0066">ATP synthesis</keyword>
<keyword id="KW-0067">ATP-binding</keyword>
<keyword id="KW-0139">CF(1)</keyword>
<keyword id="KW-0150">Chloroplast</keyword>
<keyword id="KW-0375">Hydrogen ion transport</keyword>
<keyword id="KW-0406">Ion transport</keyword>
<keyword id="KW-0472">Membrane</keyword>
<keyword id="KW-0547">Nucleotide-binding</keyword>
<keyword id="KW-0934">Plastid</keyword>
<keyword id="KW-0793">Thylakoid</keyword>
<keyword id="KW-1278">Translocase</keyword>
<keyword id="KW-0813">Transport</keyword>
<geneLocation type="chloroplast"/>
<sequence>MRINPTTSGPGVSTLEEKNLGRIAQIIGPVLDVAFPPGKMPNIYNALIVKGRDTVDQQINVTCEVQQLLGNNRVRAVAMSATDGLTRGMEVIDTGAPLSVPVGGATLGRIFNVLGEPIDNLGPADTRTTSPIHRSAPAFIQLDTKLSIFETGIKVVDLLAPYRRGGKIGLFGGAGVGKTVLIMELINNIAKAHGGVSVFGGVGERTREGNDLYMEMKESGVINEENIAESKVALVYGQMNEPPGARMRVGLTALTMAEYFRDVNEQDVLLFIDNIFRFVQAGSEVSALLGRMPSAVGYQPTLSTEMGSLQERITSTKEGSITSIQAVYVPADDLTDPAPATTFAHLDATTVLSRGLAAKGIYPAVDPLDSTSTMLQPRIVGEEHYETAQRVKQTSQRYKELQDIIAILGLDELSEEDRLTVARARKIERFLSQPFFVAEVFTGSPGKYVGLAETIRGFQLILSGELDGLPEQAFYLVGNIDEATAKAMNLDVESKLKK</sequence>
<evidence type="ECO:0000255" key="1">
    <source>
        <dbReference type="HAMAP-Rule" id="MF_01347"/>
    </source>
</evidence>
<proteinExistence type="inferred from homology"/>
<name>ATPB_CANWI</name>